<feature type="chain" id="PRO_0000419380" description="Protein PA-X">
    <location>
        <begin position="1"/>
        <end position="252"/>
    </location>
</feature>
<feature type="active site" evidence="2">
    <location>
        <position position="80"/>
    </location>
</feature>
<feature type="active site" evidence="2">
    <location>
        <position position="108"/>
    </location>
</feature>
<feature type="site" description="Important for efficient shutoff activity" evidence="5">
    <location>
        <position position="28"/>
    </location>
</feature>
<feature type="site" description="Important for efficient shutoff activity" evidence="5">
    <location>
        <position position="65"/>
    </location>
</feature>
<feature type="site" description="Important for efficient shutoff activity and nuclear localization" evidence="4">
    <location>
        <position position="195"/>
    </location>
</feature>
<feature type="site" description="Important for efficient shutoff activity and nuclear localization" evidence="4">
    <location>
        <position position="198"/>
    </location>
</feature>
<feature type="site" description="Important for efficient shutoff activity and nuclear localization" evidence="4">
    <location>
        <position position="199"/>
    </location>
</feature>
<feature type="site" description="Important for efficient shutoff activity" evidence="3">
    <location>
        <position position="202"/>
    </location>
</feature>
<feature type="site" description="Important for efficient shutoff activity" evidence="3">
    <location>
        <position position="203"/>
    </location>
</feature>
<feature type="site" description="Important for efficient shutoff activity" evidence="3">
    <location>
        <position position="206"/>
    </location>
</feature>
<feature type="sequence variant" description="In strain: Isolate MA20c.">
    <original>E</original>
    <variation>G</variation>
    <location>
        <position position="133"/>
    </location>
</feature>
<reference key="1">
    <citation type="journal article" date="2001" name="Proc. Natl. Acad. Sci. U.S.A.">
        <title>Pattern of mutation in the genome of influenza A virus on adaptation to increased virulence in the mouse lung: identification of functional themes.</title>
        <authorList>
            <person name="Brown E.G."/>
            <person name="Liu H."/>
            <person name="Kit L.C."/>
            <person name="Baird S."/>
            <person name="Nesrallah M."/>
        </authorList>
    </citation>
    <scope>NUCLEOTIDE SEQUENCE [GENOMIC RNA]</scope>
    <source>
        <strain>A/Hong Kong/1/1968</strain>
        <strain>Isolate MA20c</strain>
    </source>
</reference>
<sequence>MEDFVRQCFNPMIVELAEKAMKEYGEDLKIETNKFAAICTHLEVCFMYSDFHFINEQGESIVVELDDPNALLKHRFEIIEGRDRTMAWTVVNSICNTTGAEKPKFLPDLYDYKENRFIEIGVTRREVHIYYLEKANKIKSENTHIHIFSFTGEEMATKADYTLDEESRARIKTRLFTIRQEMANRGLWDSFVSPKEAKKQLKKDLKSQGQCAGLPTKVSRRTSPALRILEPMWMDSNRTATLRASFLKCPKK</sequence>
<organismHost>
    <name type="scientific">Aves</name>
    <dbReference type="NCBI Taxonomy" id="8782"/>
</organismHost>
<organismHost>
    <name type="scientific">Cetacea</name>
    <name type="common">whales</name>
    <dbReference type="NCBI Taxonomy" id="9721"/>
</organismHost>
<organismHost>
    <name type="scientific">Homo sapiens</name>
    <name type="common">Human</name>
    <dbReference type="NCBI Taxonomy" id="9606"/>
</organismHost>
<organismHost>
    <name type="scientific">Phocidae</name>
    <name type="common">true seals</name>
    <dbReference type="NCBI Taxonomy" id="9709"/>
</organismHost>
<organismHost>
    <name type="scientific">Sus scrofa</name>
    <name type="common">Pig</name>
    <dbReference type="NCBI Taxonomy" id="9823"/>
</organismHost>
<proteinExistence type="inferred from homology"/>
<protein>
    <recommendedName>
        <fullName>Protein PA-X</fullName>
    </recommendedName>
</protein>
<gene>
    <name type="primary">PA</name>
</gene>
<dbReference type="EMBL" id="AF348174">
    <property type="status" value="NOT_ANNOTATED_CDS"/>
    <property type="molecule type" value="Genomic_RNA"/>
</dbReference>
<dbReference type="EMBL" id="AF348175">
    <property type="status" value="NOT_ANNOTATED_CDS"/>
    <property type="molecule type" value="Genomic_RNA"/>
</dbReference>
<dbReference type="SMR" id="P0DJR7"/>
<dbReference type="Proteomes" id="UP000142359">
    <property type="component" value="Genome"/>
</dbReference>
<dbReference type="GO" id="GO:0003723">
    <property type="term" value="F:RNA binding"/>
    <property type="evidence" value="ECO:0007669"/>
    <property type="project" value="InterPro"/>
</dbReference>
<dbReference type="GO" id="GO:0039694">
    <property type="term" value="P:viral RNA genome replication"/>
    <property type="evidence" value="ECO:0007669"/>
    <property type="project" value="InterPro"/>
</dbReference>
<dbReference type="GO" id="GO:0075523">
    <property type="term" value="P:viral translational frameshifting"/>
    <property type="evidence" value="ECO:0007669"/>
    <property type="project" value="UniProtKB-KW"/>
</dbReference>
<dbReference type="FunFam" id="3.40.91.90:FF:000001">
    <property type="entry name" value="Polymerase acidic protein"/>
    <property type="match status" value="1"/>
</dbReference>
<dbReference type="Gene3D" id="3.40.91.90">
    <property type="entry name" value="Influenza RNA-dependent RNA polymerase subunit PA, endonuclease domain"/>
    <property type="match status" value="1"/>
</dbReference>
<dbReference type="InterPro" id="IPR001009">
    <property type="entry name" value="PA/PA-X"/>
</dbReference>
<dbReference type="InterPro" id="IPR038372">
    <property type="entry name" value="PA/PA-X_sf"/>
</dbReference>
<dbReference type="Pfam" id="PF00603">
    <property type="entry name" value="Flu_PA"/>
    <property type="match status" value="1"/>
</dbReference>
<accession>P0DJR7</accession>
<comment type="function">
    <text evidence="1 4">Plays a major role in the shutoff of the host protein expression by cleaving mRNAs probably via an endonuclease activity. This host shutoff allows the virus to escape from the host antiviral response (By similarity). Hijacks host RNA splicing machinery to selectively target host RNAs containing introns for destruction. This may explain the preferential degradation of RNAs that have undergone co- or post-transcriptional processing (By similarity).</text>
</comment>
<comment type="subcellular location">
    <subcellularLocation>
        <location evidence="4">Host cytoplasm</location>
    </subcellularLocation>
    <subcellularLocation>
        <location evidence="4">Host nucleus</location>
    </subcellularLocation>
</comment>
<comment type="alternative products">
    <event type="ribosomal frameshifting"/>
    <isoform>
        <id>P0DJR7-1</id>
        <name>PA-X</name>
        <sequence type="displayed"/>
    </isoform>
    <isoform>
        <id>Q91MA9-1</id>
        <name>PA</name>
        <sequence type="external"/>
    </isoform>
</comment>
<comment type="domain">
    <text evidence="1 4">The probable endonuclease active site in the N-terminus and the basic amino acid cluster in the C-terminus are important for the shutoff activity. The C-terminus acts as a nuclear localization signal (By similarity). The C-terminus is recruited to host protein complexes involved in nuclear Pol II RNA processing (By similarity).</text>
</comment>
<comment type="similarity">
    <text evidence="6">Belongs to the influenza viruses PA-X family.</text>
</comment>
<organism>
    <name type="scientific">Influenza A virus (strain A/Hong Kong/1/1968 H3N2)</name>
    <dbReference type="NCBI Taxonomy" id="506350"/>
    <lineage>
        <taxon>Viruses</taxon>
        <taxon>Riboviria</taxon>
        <taxon>Orthornavirae</taxon>
        <taxon>Negarnaviricota</taxon>
        <taxon>Polyploviricotina</taxon>
        <taxon>Insthoviricetes</taxon>
        <taxon>Articulavirales</taxon>
        <taxon>Orthomyxoviridae</taxon>
        <taxon>Alphainfluenzavirus</taxon>
        <taxon>Alphainfluenzavirus influenzae</taxon>
        <taxon>Influenza A virus</taxon>
    </lineage>
</organism>
<name>PAX_I68A4</name>
<evidence type="ECO:0000250" key="1">
    <source>
        <dbReference type="UniProtKB" id="P0CK64"/>
    </source>
</evidence>
<evidence type="ECO:0000250" key="2">
    <source>
        <dbReference type="UniProtKB" id="P0CK68"/>
    </source>
</evidence>
<evidence type="ECO:0000250" key="3">
    <source>
        <dbReference type="UniProtKB" id="P0DJW8"/>
    </source>
</evidence>
<evidence type="ECO:0000250" key="4">
    <source>
        <dbReference type="UniProtKB" id="P0DXO5"/>
    </source>
</evidence>
<evidence type="ECO:0000250" key="5">
    <source>
        <dbReference type="UniProtKB" id="P0DXO6"/>
    </source>
</evidence>
<evidence type="ECO:0000305" key="6"/>
<keyword id="KW-1132">Decay of host mRNAs by virus</keyword>
<keyword id="KW-1262">Eukaryotic host gene expression shutoff by virus</keyword>
<keyword id="KW-1035">Host cytoplasm</keyword>
<keyword id="KW-1190">Host gene expression shutoff by virus</keyword>
<keyword id="KW-1192">Host mRNA suppression by virus</keyword>
<keyword id="KW-1048">Host nucleus</keyword>
<keyword id="KW-0945">Host-virus interaction</keyword>
<keyword id="KW-0688">Ribosomal frameshifting</keyword>